<reference key="1">
    <citation type="journal article" date="2003" name="Proc. Natl. Acad. Sci. U.S.A.">
        <title>The genome of Nanoarchaeum equitans: insights into early archaeal evolution and derived parasitism.</title>
        <authorList>
            <person name="Waters E."/>
            <person name="Hohn M.J."/>
            <person name="Ahel I."/>
            <person name="Graham D.E."/>
            <person name="Adams M.D."/>
            <person name="Barnstead M."/>
            <person name="Beeson K.Y."/>
            <person name="Bibbs L."/>
            <person name="Bolanos R."/>
            <person name="Keller M."/>
            <person name="Kretz K."/>
            <person name="Lin X."/>
            <person name="Mathur E."/>
            <person name="Ni J."/>
            <person name="Podar M."/>
            <person name="Richardson T."/>
            <person name="Sutton G.G."/>
            <person name="Simon M."/>
            <person name="Soell D."/>
            <person name="Stetter K.O."/>
            <person name="Short J.M."/>
            <person name="Noorderwier M."/>
        </authorList>
    </citation>
    <scope>NUCLEOTIDE SEQUENCE [LARGE SCALE GENOMIC DNA]</scope>
    <source>
        <strain>Kin4-M</strain>
    </source>
</reference>
<keyword id="KW-0963">Cytoplasm</keyword>
<keyword id="KW-0240">DNA-directed RNA polymerase</keyword>
<keyword id="KW-0548">Nucleotidyltransferase</keyword>
<keyword id="KW-1185">Reference proteome</keyword>
<keyword id="KW-0804">Transcription</keyword>
<keyword id="KW-0808">Transferase</keyword>
<proteinExistence type="inferred from homology"/>
<comment type="function">
    <text evidence="1">DNA-dependent RNA polymerase (RNAP) catalyzes the transcription of DNA into RNA using the four ribonucleoside triphosphates as substrates.</text>
</comment>
<comment type="catalytic activity">
    <reaction evidence="1">
        <text>RNA(n) + a ribonucleoside 5'-triphosphate = RNA(n+1) + diphosphate</text>
        <dbReference type="Rhea" id="RHEA:21248"/>
        <dbReference type="Rhea" id="RHEA-COMP:14527"/>
        <dbReference type="Rhea" id="RHEA-COMP:17342"/>
        <dbReference type="ChEBI" id="CHEBI:33019"/>
        <dbReference type="ChEBI" id="CHEBI:61557"/>
        <dbReference type="ChEBI" id="CHEBI:140395"/>
        <dbReference type="EC" id="2.7.7.6"/>
    </reaction>
</comment>
<comment type="subunit">
    <text evidence="1">Part of the RNA polymerase complex.</text>
</comment>
<comment type="subcellular location">
    <subcellularLocation>
        <location evidence="1">Cytoplasm</location>
    </subcellularLocation>
</comment>
<comment type="similarity">
    <text evidence="1">Belongs to the archaeal Rpo11/eukaryotic RPB11/RPC19 RNA polymerase subunit family.</text>
</comment>
<dbReference type="EC" id="2.7.7.6" evidence="1"/>
<dbReference type="EMBL" id="AE017199">
    <property type="protein sequence ID" value="AAR39035.1"/>
    <property type="molecule type" value="Genomic_DNA"/>
</dbReference>
<dbReference type="SMR" id="Q74MN9"/>
<dbReference type="STRING" id="228908.NEQ182"/>
<dbReference type="EnsemblBacteria" id="AAR39035">
    <property type="protein sequence ID" value="AAR39035"/>
    <property type="gene ID" value="NEQ182"/>
</dbReference>
<dbReference type="KEGG" id="neq:NEQ182"/>
<dbReference type="HOGENOM" id="CLU_090381_5_1_2"/>
<dbReference type="Proteomes" id="UP000000578">
    <property type="component" value="Chromosome"/>
</dbReference>
<dbReference type="GO" id="GO:0005737">
    <property type="term" value="C:cytoplasm"/>
    <property type="evidence" value="ECO:0007669"/>
    <property type="project" value="UniProtKB-SubCell"/>
</dbReference>
<dbReference type="GO" id="GO:0000428">
    <property type="term" value="C:DNA-directed RNA polymerase complex"/>
    <property type="evidence" value="ECO:0007669"/>
    <property type="project" value="UniProtKB-KW"/>
</dbReference>
<dbReference type="GO" id="GO:0003677">
    <property type="term" value="F:DNA binding"/>
    <property type="evidence" value="ECO:0007669"/>
    <property type="project" value="InterPro"/>
</dbReference>
<dbReference type="GO" id="GO:0003899">
    <property type="term" value="F:DNA-directed RNA polymerase activity"/>
    <property type="evidence" value="ECO:0007669"/>
    <property type="project" value="UniProtKB-UniRule"/>
</dbReference>
<dbReference type="GO" id="GO:0046983">
    <property type="term" value="F:protein dimerization activity"/>
    <property type="evidence" value="ECO:0007669"/>
    <property type="project" value="InterPro"/>
</dbReference>
<dbReference type="GO" id="GO:0006351">
    <property type="term" value="P:DNA-templated transcription"/>
    <property type="evidence" value="ECO:0007669"/>
    <property type="project" value="UniProtKB-UniRule"/>
</dbReference>
<dbReference type="CDD" id="cd06927">
    <property type="entry name" value="RNAP_L"/>
    <property type="match status" value="1"/>
</dbReference>
<dbReference type="Gene3D" id="3.30.1360.10">
    <property type="entry name" value="RNA polymerase, RBP11-like subunit"/>
    <property type="match status" value="1"/>
</dbReference>
<dbReference type="HAMAP" id="MF_00261">
    <property type="entry name" value="RNApol_arch_Rpo11"/>
    <property type="match status" value="1"/>
</dbReference>
<dbReference type="InterPro" id="IPR036603">
    <property type="entry name" value="RBP11-like"/>
</dbReference>
<dbReference type="InterPro" id="IPR009025">
    <property type="entry name" value="RBP11-like_dimer"/>
</dbReference>
<dbReference type="InterPro" id="IPR008193">
    <property type="entry name" value="RNA_pol_Rpb11_13-16kDa_CS"/>
</dbReference>
<dbReference type="InterPro" id="IPR022905">
    <property type="entry name" value="Rpo11-like"/>
</dbReference>
<dbReference type="PANTHER" id="PTHR13946">
    <property type="entry name" value="DNA-DIRECTED RNA POLYMERASE I,II,III"/>
    <property type="match status" value="1"/>
</dbReference>
<dbReference type="PANTHER" id="PTHR13946:SF28">
    <property type="entry name" value="DNA-DIRECTED RNA POLYMERASES I AND III SUBUNIT RPAC2"/>
    <property type="match status" value="1"/>
</dbReference>
<dbReference type="Pfam" id="PF13656">
    <property type="entry name" value="RNA_pol_L_2"/>
    <property type="match status" value="1"/>
</dbReference>
<dbReference type="SUPFAM" id="SSF55257">
    <property type="entry name" value="RBP11-like subunits of RNA polymerase"/>
    <property type="match status" value="1"/>
</dbReference>
<dbReference type="PROSITE" id="PS01154">
    <property type="entry name" value="RNA_POL_L_13KD"/>
    <property type="match status" value="1"/>
</dbReference>
<gene>
    <name evidence="1" type="primary">rpo11</name>
    <name evidence="1" type="synonym">rpoL</name>
    <name type="ordered locus">NEQ182</name>
</gene>
<name>RPO11_NANEQ</name>
<protein>
    <recommendedName>
        <fullName evidence="1">DNA-directed RNA polymerase subunit Rpo11</fullName>
        <ecNumber evidence="1">2.7.7.6</ecNumber>
    </recommendedName>
    <alternativeName>
        <fullName evidence="1">DNA-directed RNA polymerase subunit L</fullName>
    </alternativeName>
</protein>
<organism>
    <name type="scientific">Nanoarchaeum equitans (strain Kin4-M)</name>
    <dbReference type="NCBI Taxonomy" id="228908"/>
    <lineage>
        <taxon>Archaea</taxon>
        <taxon>Nanobdellota</taxon>
        <taxon>Candidatus Nanoarchaeia</taxon>
        <taxon>Nanoarchaeales</taxon>
        <taxon>Nanoarchaeaceae</taxon>
        <taxon>Nanoarchaeum</taxon>
    </lineage>
</organism>
<accession>Q74MN9</accession>
<sequence length="96" mass="11180">MITIPTEVKILEETDNLIKVQFKGETHTLFNALKEIAYTINGVKKAAYFIEHPLKDNNYFIIETDGSIKARDALIQALKKLKEELLNFKDWYYSNL</sequence>
<feature type="chain" id="PRO_0000149331" description="DNA-directed RNA polymerase subunit Rpo11">
    <location>
        <begin position="1"/>
        <end position="96"/>
    </location>
</feature>
<evidence type="ECO:0000255" key="1">
    <source>
        <dbReference type="HAMAP-Rule" id="MF_00261"/>
    </source>
</evidence>